<reference key="1">
    <citation type="journal article" date="2000" name="Nature">
        <title>Sequence and analysis of chromosome 1 of the plant Arabidopsis thaliana.</title>
        <authorList>
            <person name="Theologis A."/>
            <person name="Ecker J.R."/>
            <person name="Palm C.J."/>
            <person name="Federspiel N.A."/>
            <person name="Kaul S."/>
            <person name="White O."/>
            <person name="Alonso J."/>
            <person name="Altafi H."/>
            <person name="Araujo R."/>
            <person name="Bowman C.L."/>
            <person name="Brooks S.Y."/>
            <person name="Buehler E."/>
            <person name="Chan A."/>
            <person name="Chao Q."/>
            <person name="Chen H."/>
            <person name="Cheuk R.F."/>
            <person name="Chin C.W."/>
            <person name="Chung M.K."/>
            <person name="Conn L."/>
            <person name="Conway A.B."/>
            <person name="Conway A.R."/>
            <person name="Creasy T.H."/>
            <person name="Dewar K."/>
            <person name="Dunn P."/>
            <person name="Etgu P."/>
            <person name="Feldblyum T.V."/>
            <person name="Feng J.-D."/>
            <person name="Fong B."/>
            <person name="Fujii C.Y."/>
            <person name="Gill J.E."/>
            <person name="Goldsmith A.D."/>
            <person name="Haas B."/>
            <person name="Hansen N.F."/>
            <person name="Hughes B."/>
            <person name="Huizar L."/>
            <person name="Hunter J.L."/>
            <person name="Jenkins J."/>
            <person name="Johnson-Hopson C."/>
            <person name="Khan S."/>
            <person name="Khaykin E."/>
            <person name="Kim C.J."/>
            <person name="Koo H.L."/>
            <person name="Kremenetskaia I."/>
            <person name="Kurtz D.B."/>
            <person name="Kwan A."/>
            <person name="Lam B."/>
            <person name="Langin-Hooper S."/>
            <person name="Lee A."/>
            <person name="Lee J.M."/>
            <person name="Lenz C.A."/>
            <person name="Li J.H."/>
            <person name="Li Y.-P."/>
            <person name="Lin X."/>
            <person name="Liu S.X."/>
            <person name="Liu Z.A."/>
            <person name="Luros J.S."/>
            <person name="Maiti R."/>
            <person name="Marziali A."/>
            <person name="Militscher J."/>
            <person name="Miranda M."/>
            <person name="Nguyen M."/>
            <person name="Nierman W.C."/>
            <person name="Osborne B.I."/>
            <person name="Pai G."/>
            <person name="Peterson J."/>
            <person name="Pham P.K."/>
            <person name="Rizzo M."/>
            <person name="Rooney T."/>
            <person name="Rowley D."/>
            <person name="Sakano H."/>
            <person name="Salzberg S.L."/>
            <person name="Schwartz J.R."/>
            <person name="Shinn P."/>
            <person name="Southwick A.M."/>
            <person name="Sun H."/>
            <person name="Tallon L.J."/>
            <person name="Tambunga G."/>
            <person name="Toriumi M.J."/>
            <person name="Town C.D."/>
            <person name="Utterback T."/>
            <person name="Van Aken S."/>
            <person name="Vaysberg M."/>
            <person name="Vysotskaia V.S."/>
            <person name="Walker M."/>
            <person name="Wu D."/>
            <person name="Yu G."/>
            <person name="Fraser C.M."/>
            <person name="Venter J.C."/>
            <person name="Davis R.W."/>
        </authorList>
    </citation>
    <scope>NUCLEOTIDE SEQUENCE [LARGE SCALE GENOMIC DNA]</scope>
    <source>
        <strain>cv. Columbia</strain>
    </source>
</reference>
<reference key="2">
    <citation type="journal article" date="2017" name="Plant J.">
        <title>Araport11: a complete reannotation of the Arabidopsis thaliana reference genome.</title>
        <authorList>
            <person name="Cheng C.Y."/>
            <person name="Krishnakumar V."/>
            <person name="Chan A.P."/>
            <person name="Thibaud-Nissen F."/>
            <person name="Schobel S."/>
            <person name="Town C.D."/>
        </authorList>
    </citation>
    <scope>GENOME REANNOTATION</scope>
    <source>
        <strain>cv. Columbia</strain>
    </source>
</reference>
<reference key="3">
    <citation type="journal article" date="2003" name="Science">
        <title>Empirical analysis of transcriptional activity in the Arabidopsis genome.</title>
        <authorList>
            <person name="Yamada K."/>
            <person name="Lim J."/>
            <person name="Dale J.M."/>
            <person name="Chen H."/>
            <person name="Shinn P."/>
            <person name="Palm C.J."/>
            <person name="Southwick A.M."/>
            <person name="Wu H.C."/>
            <person name="Kim C.J."/>
            <person name="Nguyen M."/>
            <person name="Pham P.K."/>
            <person name="Cheuk R.F."/>
            <person name="Karlin-Newmann G."/>
            <person name="Liu S.X."/>
            <person name="Lam B."/>
            <person name="Sakano H."/>
            <person name="Wu T."/>
            <person name="Yu G."/>
            <person name="Miranda M."/>
            <person name="Quach H.L."/>
            <person name="Tripp M."/>
            <person name="Chang C.H."/>
            <person name="Lee J.M."/>
            <person name="Toriumi M.J."/>
            <person name="Chan M.M."/>
            <person name="Tang C.C."/>
            <person name="Onodera C.S."/>
            <person name="Deng J.M."/>
            <person name="Akiyama K."/>
            <person name="Ansari Y."/>
            <person name="Arakawa T."/>
            <person name="Banh J."/>
            <person name="Banno F."/>
            <person name="Bowser L."/>
            <person name="Brooks S.Y."/>
            <person name="Carninci P."/>
            <person name="Chao Q."/>
            <person name="Choy N."/>
            <person name="Enju A."/>
            <person name="Goldsmith A.D."/>
            <person name="Gurjal M."/>
            <person name="Hansen N.F."/>
            <person name="Hayashizaki Y."/>
            <person name="Johnson-Hopson C."/>
            <person name="Hsuan V.W."/>
            <person name="Iida K."/>
            <person name="Karnes M."/>
            <person name="Khan S."/>
            <person name="Koesema E."/>
            <person name="Ishida J."/>
            <person name="Jiang P.X."/>
            <person name="Jones T."/>
            <person name="Kawai J."/>
            <person name="Kamiya A."/>
            <person name="Meyers C."/>
            <person name="Nakajima M."/>
            <person name="Narusaka M."/>
            <person name="Seki M."/>
            <person name="Sakurai T."/>
            <person name="Satou M."/>
            <person name="Tamse R."/>
            <person name="Vaysberg M."/>
            <person name="Wallender E.K."/>
            <person name="Wong C."/>
            <person name="Yamamura Y."/>
            <person name="Yuan S."/>
            <person name="Shinozaki K."/>
            <person name="Davis R.W."/>
            <person name="Theologis A."/>
            <person name="Ecker J.R."/>
        </authorList>
    </citation>
    <scope>NUCLEOTIDE SEQUENCE [LARGE SCALE MRNA]</scope>
    <source>
        <strain>cv. Columbia</strain>
    </source>
</reference>
<reference key="4">
    <citation type="journal article" date="2009" name="J. Proteomics">
        <title>Phosphoproteomic analysis of nuclei-enriched fractions from Arabidopsis thaliana.</title>
        <authorList>
            <person name="Jones A.M.E."/>
            <person name="MacLean D."/>
            <person name="Studholme D.J."/>
            <person name="Serna-Sanz A."/>
            <person name="Andreasson E."/>
            <person name="Rathjen J.P."/>
            <person name="Peck S.C."/>
        </authorList>
    </citation>
    <scope>IDENTIFICATION BY MASS SPECTROMETRY [LARGE SCALE ANALYSIS]</scope>
    <source>
        <strain>cv. Columbia</strain>
    </source>
</reference>
<reference key="5">
    <citation type="journal article" date="2009" name="Plant Physiol.">
        <title>Large-scale Arabidopsis phosphoproteome profiling reveals novel chloroplast kinase substrates and phosphorylation networks.</title>
        <authorList>
            <person name="Reiland S."/>
            <person name="Messerli G."/>
            <person name="Baerenfaller K."/>
            <person name="Gerrits B."/>
            <person name="Endler A."/>
            <person name="Grossmann J."/>
            <person name="Gruissem W."/>
            <person name="Baginsky S."/>
        </authorList>
    </citation>
    <scope>IDENTIFICATION BY MASS SPECTROMETRY [LARGE SCALE ANALYSIS]</scope>
</reference>
<reference key="6">
    <citation type="journal article" date="2010" name="PLoS ONE">
        <title>In silico identification of carboxylate clamp type tetratricopeptide repeat proteins in Arabidopsis and rice as putative co-chaperones of Hsp90/Hsp70.</title>
        <authorList>
            <person name="Prasad B.D."/>
            <person name="Goel S."/>
            <person name="Krishna P."/>
        </authorList>
    </citation>
    <scope>GENE FAMILY</scope>
    <scope>NOMENCLATURE</scope>
    <scope>TISSUE SPECIFICITY</scope>
    <scope>INDUCTION BY HEAT</scope>
</reference>
<reference key="7">
    <citation type="journal article" date="2011" name="Proc. Natl. Acad. Sci. U.S.A.">
        <title>CLUMPED CHLOROPLASTS 1 is required for plastid separation in Arabidopsis.</title>
        <authorList>
            <person name="Yang Y."/>
            <person name="Sage T.L."/>
            <person name="Liu Y."/>
            <person name="Ahmad T.R."/>
            <person name="Marshall W.F."/>
            <person name="Shiu S.H."/>
            <person name="Froehlich J.E."/>
            <person name="Imre K.M."/>
            <person name="Osteryoung K.W."/>
        </authorList>
    </citation>
    <scope>FUNCTION</scope>
    <scope>SUBCELLULAR LOCATION</scope>
    <scope>DISRUPTION PHENOTYPE</scope>
    <scope>TISSUE SPECIFICITY</scope>
</reference>
<reference key="8">
    <citation type="journal article" date="2017" name="Proc. Natl. Acad. Sci. U.S.A.">
        <title>Myosin-driven transport network in plants.</title>
        <authorList>
            <person name="Kurth E.G."/>
            <person name="Peremyslov V.V."/>
            <person name="Turner H.L."/>
            <person name="Makarova K.S."/>
            <person name="Iranzo J."/>
            <person name="Mekhedov S.L."/>
            <person name="Koonin E.V."/>
            <person name="Dolja V.V."/>
        </authorList>
    </citation>
    <scope>FUNCTION</scope>
    <scope>INTERACTION WITH XI-K</scope>
    <scope>DISRUPTION PHENOTYPE</scope>
</reference>
<keyword id="KW-0963">Cytoplasm</keyword>
<keyword id="KW-1185">Reference proteome</keyword>
<keyword id="KW-0677">Repeat</keyword>
<keyword id="KW-0802">TPR repeat</keyword>
<accession>O48802</accession>
<accession>Q8RWK1</accession>
<protein>
    <recommendedName>
        <fullName evidence="8">Protein CLMP1</fullName>
    </recommendedName>
    <alternativeName>
        <fullName evidence="8">CLUMPED CHLOROPLASTS 1</fullName>
    </alternativeName>
    <alternativeName>
        <fullName evidence="9">Protein MADB2</fullName>
    </alternativeName>
    <alternativeName>
        <fullName evidence="7">Protein PHOX2</fullName>
    </alternativeName>
    <alternativeName>
        <fullName evidence="9">Putative myosin adapter B2</fullName>
    </alternativeName>
</protein>
<evidence type="ECO:0000255" key="1"/>
<evidence type="ECO:0000255" key="2">
    <source>
        <dbReference type="PROSITE-ProRule" id="PRU01081"/>
    </source>
</evidence>
<evidence type="ECO:0000256" key="3">
    <source>
        <dbReference type="SAM" id="MobiDB-lite"/>
    </source>
</evidence>
<evidence type="ECO:0000269" key="4">
    <source>
    </source>
</evidence>
<evidence type="ECO:0000269" key="5">
    <source>
    </source>
</evidence>
<evidence type="ECO:0000269" key="6">
    <source>
    </source>
</evidence>
<evidence type="ECO:0000303" key="7">
    <source>
    </source>
</evidence>
<evidence type="ECO:0000303" key="8">
    <source>
    </source>
</evidence>
<evidence type="ECO:0000303" key="9">
    <source>
    </source>
</evidence>
<evidence type="ECO:0000312" key="10">
    <source>
        <dbReference type="Araport" id="AT1G62390"/>
    </source>
</evidence>
<evidence type="ECO:0000312" key="11">
    <source>
        <dbReference type="EMBL" id="AAF70848.1"/>
    </source>
</evidence>
<name>PHOX2_ARATH</name>
<proteinExistence type="evidence at protein level"/>
<organism>
    <name type="scientific">Arabidopsis thaliana</name>
    <name type="common">Mouse-ear cress</name>
    <dbReference type="NCBI Taxonomy" id="3702"/>
    <lineage>
        <taxon>Eukaryota</taxon>
        <taxon>Viridiplantae</taxon>
        <taxon>Streptophyta</taxon>
        <taxon>Embryophyta</taxon>
        <taxon>Tracheophyta</taxon>
        <taxon>Spermatophyta</taxon>
        <taxon>Magnoliopsida</taxon>
        <taxon>eudicotyledons</taxon>
        <taxon>Gunneridae</taxon>
        <taxon>Pentapetalae</taxon>
        <taxon>rosids</taxon>
        <taxon>malvids</taxon>
        <taxon>Brassicales</taxon>
        <taxon>Brassicaceae</taxon>
        <taxon>Camelineae</taxon>
        <taxon>Arabidopsis</taxon>
    </lineage>
</organism>
<sequence length="751" mass="82708">MGKSGGRKKKSGGSNSNSSQVNSSETSGLSKPSTIVNGGVDFDASIFLKRAHELKEEGNKKFQARDYVGALEQYENGIKLIPKSHPDRAVFHSNRAACLMQMKPIDYESVISECSMALKSQPGFTRALLRRARAFEAVGKFDLAVQDVNVLLGSDPNHKDAGEISKRLKTALGPHQDLQSRPSPAALGASAALGGPIAGLGPCLPSRNVHKKGVTSPVGSVSLPNASNGKVERPQVVNPVTENGGSVSKGQASRVVLKPVSHSPKGSKVEELGSSSVAVVGKVQEKRIRWRPLKFVYDHDIRLGQMPVNCRFKELREIVSSRFPSSKAVLIKYKDNDGDLVTITSTAELKLAESAADCILTKEPDTDKSDSVGMLRLHVVDVSPEQEPMLLEEEEEEVEEKPVIEEVISSPTESLSETEINTEKTDKEVEKEKASSSEDPETKELEMDDWLFDFAHLFRTHVGIDPDAHIDLHELGMELCSEALEETVTSEKAQPLFDKASAKFQEVAALAFFNWGNVHMCAARKRIPLDESAGKEVVAAQLQTAYEWVKERYTLAKEKYEQALSIKPDFYEGLLALGQQQFEMAKLHWSYLLAQKIDISGWDPSETLNLFDSAEAKMKDATEMWEKLEEQRMDDLKNPNSNKKEEVSKRRKKQGGDGNEEVSETITAEEAAEQATAMRSQIHLFWGNMLFERSQVECKIGKDGWNKNLDSAVERFKLAGASEADIATVVKNHCSNEAAATEGDEKKVPAP</sequence>
<feature type="chain" id="PRO_0000440020" description="Protein CLMP1" evidence="1">
    <location>
        <begin position="1"/>
        <end position="751"/>
    </location>
</feature>
<feature type="repeat" description="TPR 1" evidence="1">
    <location>
        <begin position="51"/>
        <end position="84"/>
    </location>
</feature>
<feature type="repeat" description="TPR 2" evidence="1">
    <location>
        <begin position="89"/>
        <end position="124"/>
    </location>
</feature>
<feature type="repeat" description="TPR 3" evidence="1">
    <location>
        <begin position="125"/>
        <end position="158"/>
    </location>
</feature>
<feature type="domain" description="PB1" evidence="2">
    <location>
        <begin position="290"/>
        <end position="382"/>
    </location>
</feature>
<feature type="repeat" description="TPR 4" evidence="1">
    <location>
        <begin position="434"/>
        <end position="468"/>
    </location>
</feature>
<feature type="repeat" description="TPR 5" evidence="1">
    <location>
        <begin position="481"/>
        <end position="514"/>
    </location>
</feature>
<feature type="repeat" description="TPR 6" evidence="1">
    <location>
        <begin position="536"/>
        <end position="570"/>
    </location>
</feature>
<feature type="region of interest" description="Disordered" evidence="3">
    <location>
        <begin position="1"/>
        <end position="33"/>
    </location>
</feature>
<feature type="region of interest" description="Disordered" evidence="3">
    <location>
        <begin position="386"/>
        <end position="443"/>
    </location>
</feature>
<feature type="region of interest" description="Disordered" evidence="3">
    <location>
        <begin position="630"/>
        <end position="663"/>
    </location>
</feature>
<feature type="compositionally biased region" description="Basic residues" evidence="3">
    <location>
        <begin position="1"/>
        <end position="11"/>
    </location>
</feature>
<feature type="compositionally biased region" description="Low complexity" evidence="3">
    <location>
        <begin position="12"/>
        <end position="28"/>
    </location>
</feature>
<feature type="compositionally biased region" description="Acidic residues" evidence="3">
    <location>
        <begin position="390"/>
        <end position="399"/>
    </location>
</feature>
<feature type="compositionally biased region" description="Polar residues" evidence="3">
    <location>
        <begin position="409"/>
        <end position="419"/>
    </location>
</feature>
<feature type="compositionally biased region" description="Basic and acidic residues" evidence="3">
    <location>
        <begin position="421"/>
        <end position="443"/>
    </location>
</feature>
<feature type="compositionally biased region" description="Basic and acidic residues" evidence="3">
    <location>
        <begin position="630"/>
        <end position="648"/>
    </location>
</feature>
<gene>
    <name evidence="8" type="primary">CLMP1</name>
    <name evidence="9" type="synonym">MADB2</name>
    <name evidence="7" type="synonym">PHOX2</name>
    <name evidence="10" type="ordered locus">At1g62390</name>
    <name evidence="11" type="ORF">F2401.12</name>
</gene>
<dbReference type="EMBL" id="AC003113">
    <property type="protein sequence ID" value="AAF70848.1"/>
    <property type="molecule type" value="Genomic_DNA"/>
</dbReference>
<dbReference type="EMBL" id="CP002684">
    <property type="protein sequence ID" value="AEE33961.1"/>
    <property type="molecule type" value="Genomic_DNA"/>
</dbReference>
<dbReference type="EMBL" id="AY080782">
    <property type="protein sequence ID" value="AAL87265.1"/>
    <property type="molecule type" value="mRNA"/>
</dbReference>
<dbReference type="EMBL" id="AY113996">
    <property type="protein sequence ID" value="AAM45044.1"/>
    <property type="molecule type" value="mRNA"/>
</dbReference>
<dbReference type="EMBL" id="AY093038">
    <property type="protein sequence ID" value="AAM13037.1"/>
    <property type="molecule type" value="mRNA"/>
</dbReference>
<dbReference type="PIR" id="T01449">
    <property type="entry name" value="T01449"/>
</dbReference>
<dbReference type="RefSeq" id="NP_564794.1">
    <property type="nucleotide sequence ID" value="NM_104919.4"/>
</dbReference>
<dbReference type="SMR" id="O48802"/>
<dbReference type="FunCoup" id="O48802">
    <property type="interactions" value="1414"/>
</dbReference>
<dbReference type="IntAct" id="O48802">
    <property type="interactions" value="1"/>
</dbReference>
<dbReference type="STRING" id="3702.O48802"/>
<dbReference type="iPTMnet" id="O48802"/>
<dbReference type="PaxDb" id="3702-AT1G62390.1"/>
<dbReference type="ProteomicsDB" id="235108"/>
<dbReference type="EnsemblPlants" id="AT1G62390.1">
    <property type="protein sequence ID" value="AT1G62390.1"/>
    <property type="gene ID" value="AT1G62390"/>
</dbReference>
<dbReference type="GeneID" id="842537"/>
<dbReference type="Gramene" id="AT1G62390.1">
    <property type="protein sequence ID" value="AT1G62390.1"/>
    <property type="gene ID" value="AT1G62390"/>
</dbReference>
<dbReference type="KEGG" id="ath:AT1G62390"/>
<dbReference type="Araport" id="AT1G62390"/>
<dbReference type="TAIR" id="AT1G62390">
    <property type="gene designation" value="PHOX2"/>
</dbReference>
<dbReference type="eggNOG" id="KOG4151">
    <property type="taxonomic scope" value="Eukaryota"/>
</dbReference>
<dbReference type="HOGENOM" id="CLU_014258_1_0_1"/>
<dbReference type="InParanoid" id="O48802"/>
<dbReference type="OMA" id="KVATEMW"/>
<dbReference type="OrthoDB" id="2942533at2759"/>
<dbReference type="PhylomeDB" id="O48802"/>
<dbReference type="PRO" id="PR:O48802"/>
<dbReference type="Proteomes" id="UP000006548">
    <property type="component" value="Chromosome 1"/>
</dbReference>
<dbReference type="ExpressionAtlas" id="O48802">
    <property type="expression patterns" value="baseline and differential"/>
</dbReference>
<dbReference type="GO" id="GO:0005737">
    <property type="term" value="C:cytoplasm"/>
    <property type="evidence" value="ECO:0007669"/>
    <property type="project" value="UniProtKB-SubCell"/>
</dbReference>
<dbReference type="GO" id="GO:0005634">
    <property type="term" value="C:nucleus"/>
    <property type="evidence" value="ECO:0007005"/>
    <property type="project" value="TAIR"/>
</dbReference>
<dbReference type="GO" id="GO:0003729">
    <property type="term" value="F:mRNA binding"/>
    <property type="evidence" value="ECO:0000314"/>
    <property type="project" value="TAIR"/>
</dbReference>
<dbReference type="CDD" id="cd05992">
    <property type="entry name" value="PB1"/>
    <property type="match status" value="1"/>
</dbReference>
<dbReference type="Gene3D" id="3.10.20.90">
    <property type="entry name" value="Phosphatidylinositol 3-kinase Catalytic Subunit, Chain A, domain 1"/>
    <property type="match status" value="1"/>
</dbReference>
<dbReference type="Gene3D" id="1.25.40.10">
    <property type="entry name" value="Tetratricopeptide repeat domain"/>
    <property type="match status" value="1"/>
</dbReference>
<dbReference type="InterPro" id="IPR053793">
    <property type="entry name" value="PB1-like"/>
</dbReference>
<dbReference type="InterPro" id="IPR000270">
    <property type="entry name" value="PB1_dom"/>
</dbReference>
<dbReference type="InterPro" id="IPR044517">
    <property type="entry name" value="PHOX1-4"/>
</dbReference>
<dbReference type="InterPro" id="IPR011990">
    <property type="entry name" value="TPR-like_helical_dom_sf"/>
</dbReference>
<dbReference type="InterPro" id="IPR019734">
    <property type="entry name" value="TPR_rpt"/>
</dbReference>
<dbReference type="PANTHER" id="PTHR46183">
    <property type="entry name" value="PROTEIN CLMP1"/>
    <property type="match status" value="1"/>
</dbReference>
<dbReference type="PANTHER" id="PTHR46183:SF8">
    <property type="entry name" value="PROTEIN CLMP1"/>
    <property type="match status" value="1"/>
</dbReference>
<dbReference type="Pfam" id="PF00564">
    <property type="entry name" value="PB1"/>
    <property type="match status" value="1"/>
</dbReference>
<dbReference type="SMART" id="SM00666">
    <property type="entry name" value="PB1"/>
    <property type="match status" value="1"/>
</dbReference>
<dbReference type="SMART" id="SM00028">
    <property type="entry name" value="TPR"/>
    <property type="match status" value="4"/>
</dbReference>
<dbReference type="SUPFAM" id="SSF54277">
    <property type="entry name" value="CAD &amp; PB1 domains"/>
    <property type="match status" value="1"/>
</dbReference>
<dbReference type="SUPFAM" id="SSF48452">
    <property type="entry name" value="TPR-like"/>
    <property type="match status" value="1"/>
</dbReference>
<dbReference type="PROSITE" id="PS51745">
    <property type="entry name" value="PB1"/>
    <property type="match status" value="1"/>
</dbReference>
<dbReference type="PROSITE" id="PS50293">
    <property type="entry name" value="TPR_REGION"/>
    <property type="match status" value="1"/>
</dbReference>
<comment type="function">
    <text evidence="5 6">Required for plastid separation and partitioning during cell division (PubMed:22025705). Not involved in plastid constriction or in the organization of cytoplasmic actin cables (PubMed:22025705). Contributes to polar growth of root hairs (PubMed:28096376).</text>
</comment>
<comment type="subunit">
    <text evidence="6">Interacts with myosin XI-K.</text>
</comment>
<comment type="subcellular location">
    <subcellularLocation>
        <location evidence="5">Cytoplasm</location>
    </subcellularLocation>
    <text evidence="5">Localized to distinct foci in the cytoplasm, which frequently colocalize with the cell periphery and with chloroplasts.</text>
</comment>
<comment type="tissue specificity">
    <text evidence="4 5">Expressed in roots, stems, leaves, apex, flowers and seeds (PubMed:20856808). Detected throughout the petiole in juvenile and young leaves, but restricted to the petiole midvein in older leaves (PubMed:22025705). Expressed in hydathodes, at the base of the trichome, in the vascular cylinder of primary root and lateral root, in emerging lateral root primordia, in pollen and in developing embryos, but not in mature embryos (PubMed:22025705).</text>
</comment>
<comment type="induction">
    <text evidence="4">Up-regulated by heat.</text>
</comment>
<comment type="disruption phenotype">
    <text evidence="5 6">Normal constriction of plastids during division, but impaired separation, resulting in plastid clustering. The clumped-chloroplasts mutant phenotype is transient. In juvenile leaves, clustered chloroplasts are observed in almost all cells of the petiole, while in the oldest leaf, the phenotype is mostly absent (PubMed:22025705). Phox1, phox2, phox3 and phox4 quadruple mutants show a 70% reduction in root hair growth (PubMed:28096376).</text>
</comment>